<proteinExistence type="inferred from homology"/>
<accession>B0TQF3</accession>
<comment type="function">
    <text evidence="1">Produces ATP from ADP in the presence of a proton gradient across the membrane.</text>
</comment>
<comment type="subunit">
    <text evidence="1">F-type ATPases have 2 components, CF(1) - the catalytic core - and CF(0) - the membrane proton channel. CF(1) has five subunits: alpha(3), beta(3), gamma(1), delta(1), epsilon(1). CF(0) has three main subunits: a, b and c.</text>
</comment>
<comment type="subcellular location">
    <subcellularLocation>
        <location evidence="1">Cell inner membrane</location>
        <topology evidence="1">Peripheral membrane protein</topology>
    </subcellularLocation>
</comment>
<comment type="similarity">
    <text evidence="1">Belongs to the ATPase epsilon chain family.</text>
</comment>
<keyword id="KW-0066">ATP synthesis</keyword>
<keyword id="KW-0997">Cell inner membrane</keyword>
<keyword id="KW-1003">Cell membrane</keyword>
<keyword id="KW-0139">CF(1)</keyword>
<keyword id="KW-0375">Hydrogen ion transport</keyword>
<keyword id="KW-0406">Ion transport</keyword>
<keyword id="KW-0472">Membrane</keyword>
<keyword id="KW-0813">Transport</keyword>
<reference key="1">
    <citation type="submission" date="2008-01" db="EMBL/GenBank/DDBJ databases">
        <title>Complete sequence of Shewanella halifaxensis HAW-EB4.</title>
        <authorList>
            <consortium name="US DOE Joint Genome Institute"/>
            <person name="Copeland A."/>
            <person name="Lucas S."/>
            <person name="Lapidus A."/>
            <person name="Glavina del Rio T."/>
            <person name="Dalin E."/>
            <person name="Tice H."/>
            <person name="Bruce D."/>
            <person name="Goodwin L."/>
            <person name="Pitluck S."/>
            <person name="Sims D."/>
            <person name="Brettin T."/>
            <person name="Detter J.C."/>
            <person name="Han C."/>
            <person name="Kuske C.R."/>
            <person name="Schmutz J."/>
            <person name="Larimer F."/>
            <person name="Land M."/>
            <person name="Hauser L."/>
            <person name="Kyrpides N."/>
            <person name="Kim E."/>
            <person name="Zhao J.-S."/>
            <person name="Richardson P."/>
        </authorList>
    </citation>
    <scope>NUCLEOTIDE SEQUENCE [LARGE SCALE GENOMIC DNA]</scope>
    <source>
        <strain>HAW-EB4</strain>
    </source>
</reference>
<organism>
    <name type="scientific">Shewanella halifaxensis (strain HAW-EB4)</name>
    <dbReference type="NCBI Taxonomy" id="458817"/>
    <lineage>
        <taxon>Bacteria</taxon>
        <taxon>Pseudomonadati</taxon>
        <taxon>Pseudomonadota</taxon>
        <taxon>Gammaproteobacteria</taxon>
        <taxon>Alteromonadales</taxon>
        <taxon>Shewanellaceae</taxon>
        <taxon>Shewanella</taxon>
    </lineage>
</organism>
<name>ATPE_SHEHH</name>
<evidence type="ECO:0000255" key="1">
    <source>
        <dbReference type="HAMAP-Rule" id="MF_00530"/>
    </source>
</evidence>
<dbReference type="EMBL" id="CP000931">
    <property type="protein sequence ID" value="ABZ78833.1"/>
    <property type="molecule type" value="Genomic_DNA"/>
</dbReference>
<dbReference type="RefSeq" id="WP_012279337.1">
    <property type="nucleotide sequence ID" value="NC_010334.1"/>
</dbReference>
<dbReference type="SMR" id="B0TQF3"/>
<dbReference type="STRING" id="458817.Shal_4293"/>
<dbReference type="KEGG" id="shl:Shal_4293"/>
<dbReference type="eggNOG" id="COG0355">
    <property type="taxonomic scope" value="Bacteria"/>
</dbReference>
<dbReference type="HOGENOM" id="CLU_084338_2_0_6"/>
<dbReference type="OrthoDB" id="9791445at2"/>
<dbReference type="Proteomes" id="UP000001317">
    <property type="component" value="Chromosome"/>
</dbReference>
<dbReference type="GO" id="GO:0005886">
    <property type="term" value="C:plasma membrane"/>
    <property type="evidence" value="ECO:0007669"/>
    <property type="project" value="UniProtKB-SubCell"/>
</dbReference>
<dbReference type="GO" id="GO:0045259">
    <property type="term" value="C:proton-transporting ATP synthase complex"/>
    <property type="evidence" value="ECO:0007669"/>
    <property type="project" value="UniProtKB-KW"/>
</dbReference>
<dbReference type="GO" id="GO:0005524">
    <property type="term" value="F:ATP binding"/>
    <property type="evidence" value="ECO:0007669"/>
    <property type="project" value="UniProtKB-UniRule"/>
</dbReference>
<dbReference type="GO" id="GO:0046933">
    <property type="term" value="F:proton-transporting ATP synthase activity, rotational mechanism"/>
    <property type="evidence" value="ECO:0007669"/>
    <property type="project" value="UniProtKB-UniRule"/>
</dbReference>
<dbReference type="CDD" id="cd12152">
    <property type="entry name" value="F1-ATPase_delta"/>
    <property type="match status" value="1"/>
</dbReference>
<dbReference type="FunFam" id="1.20.5.440:FF:000001">
    <property type="entry name" value="ATP synthase epsilon chain"/>
    <property type="match status" value="1"/>
</dbReference>
<dbReference type="FunFam" id="2.60.15.10:FF:000001">
    <property type="entry name" value="ATP synthase epsilon chain"/>
    <property type="match status" value="1"/>
</dbReference>
<dbReference type="Gene3D" id="1.20.5.440">
    <property type="entry name" value="ATP synthase delta/epsilon subunit, C-terminal domain"/>
    <property type="match status" value="1"/>
</dbReference>
<dbReference type="Gene3D" id="2.60.15.10">
    <property type="entry name" value="F0F1 ATP synthase delta/epsilon subunit, N-terminal"/>
    <property type="match status" value="1"/>
</dbReference>
<dbReference type="HAMAP" id="MF_00530">
    <property type="entry name" value="ATP_synth_epsil_bac"/>
    <property type="match status" value="1"/>
</dbReference>
<dbReference type="InterPro" id="IPR036794">
    <property type="entry name" value="ATP_F1_dsu/esu_C_sf"/>
</dbReference>
<dbReference type="InterPro" id="IPR001469">
    <property type="entry name" value="ATP_synth_F1_dsu/esu"/>
</dbReference>
<dbReference type="InterPro" id="IPR020546">
    <property type="entry name" value="ATP_synth_F1_dsu/esu_N"/>
</dbReference>
<dbReference type="InterPro" id="IPR020547">
    <property type="entry name" value="ATP_synth_F1_esu_C"/>
</dbReference>
<dbReference type="InterPro" id="IPR036771">
    <property type="entry name" value="ATPsynth_dsu/esu_N"/>
</dbReference>
<dbReference type="NCBIfam" id="TIGR01216">
    <property type="entry name" value="ATP_synt_epsi"/>
    <property type="match status" value="1"/>
</dbReference>
<dbReference type="NCBIfam" id="NF001847">
    <property type="entry name" value="PRK00571.1-4"/>
    <property type="match status" value="1"/>
</dbReference>
<dbReference type="PANTHER" id="PTHR13822">
    <property type="entry name" value="ATP SYNTHASE DELTA/EPSILON CHAIN"/>
    <property type="match status" value="1"/>
</dbReference>
<dbReference type="PANTHER" id="PTHR13822:SF10">
    <property type="entry name" value="ATP SYNTHASE EPSILON CHAIN, CHLOROPLASTIC"/>
    <property type="match status" value="1"/>
</dbReference>
<dbReference type="Pfam" id="PF00401">
    <property type="entry name" value="ATP-synt_DE"/>
    <property type="match status" value="1"/>
</dbReference>
<dbReference type="Pfam" id="PF02823">
    <property type="entry name" value="ATP-synt_DE_N"/>
    <property type="match status" value="1"/>
</dbReference>
<dbReference type="SUPFAM" id="SSF46604">
    <property type="entry name" value="Epsilon subunit of F1F0-ATP synthase C-terminal domain"/>
    <property type="match status" value="1"/>
</dbReference>
<dbReference type="SUPFAM" id="SSF51344">
    <property type="entry name" value="Epsilon subunit of F1F0-ATP synthase N-terminal domain"/>
    <property type="match status" value="1"/>
</dbReference>
<sequence>MAAMTVQLDMVSAESNIFSGRVAQLQVSGTEGELGIMPGHAALLTSIKPGMARIVKQDGSEEVFYLSGGILEVQPSSISVLADVVLRAEEIDEQAAVEAKRRAEAHMANAGADFNYAAAAIELAQAIAQLRVVETIKKNISR</sequence>
<feature type="chain" id="PRO_1000081745" description="ATP synthase epsilon chain">
    <location>
        <begin position="1"/>
        <end position="142"/>
    </location>
</feature>
<protein>
    <recommendedName>
        <fullName evidence="1">ATP synthase epsilon chain</fullName>
    </recommendedName>
    <alternativeName>
        <fullName evidence="1">ATP synthase F1 sector epsilon subunit</fullName>
    </alternativeName>
    <alternativeName>
        <fullName evidence="1">F-ATPase epsilon subunit</fullName>
    </alternativeName>
</protein>
<gene>
    <name evidence="1" type="primary">atpC</name>
    <name type="ordered locus">Shal_4293</name>
</gene>